<gene>
    <name evidence="1" type="primary">cobQ</name>
    <name type="ordered locus">Vapar_2565</name>
</gene>
<sequence>MTTRCVMVLGTTSGAGKSWLTAALCRWYARQGLKVAPFKAQNMSNNARVVGGGEIGSAQYFQALAARAVPDVRMNPLLLKPERDTHSQVVLMGQVSAELTAMPWRGRSERVWPQIAQALDALRAENDVVVIEGAGSPAEINLMASDIVNLRVARHADARCLLVTDIDRGGAFAHLYGTWALMPESDRALLRGFVLNKFRGDASLLAPAPQQLQALTGIATVATLPMWREHGLPEEDGVFDDRSHASGAVTRTVAVVAYPRISNLDEFQPLKNVPGVRLAWARTPAELAGADWIVLPGSKHTSGDLAWLRAQGLDRAIAAHAARGGAVLGVCGGLQMLGEALVDPHGIDGNAPGLGLLPLVTVFEREKTVRHRAAVFGQLGGAWASLSNVPVAGYEIHHGQTAIHPQMAQDGHAVMPEGLAWQNARGNVLGLYLHGLFEDAAALHALFGAAAPTLDATFDGLADFIDNHFEAGVLQGLIA</sequence>
<comment type="function">
    <text evidence="1">Catalyzes amidations at positions B, D, E, and G on adenosylcobyrinic A,C-diamide. NH(2) groups are provided by glutamine, and one molecule of ATP is hydrogenolyzed for each amidation.</text>
</comment>
<comment type="pathway">
    <text evidence="1">Cofactor biosynthesis; adenosylcobalamin biosynthesis.</text>
</comment>
<comment type="similarity">
    <text evidence="1">Belongs to the CobB/CobQ family. CobQ subfamily.</text>
</comment>
<evidence type="ECO:0000255" key="1">
    <source>
        <dbReference type="HAMAP-Rule" id="MF_00028"/>
    </source>
</evidence>
<proteinExistence type="inferred from homology"/>
<protein>
    <recommendedName>
        <fullName evidence="1">Cobyric acid synthase</fullName>
    </recommendedName>
</protein>
<reference key="1">
    <citation type="journal article" date="2011" name="J. Bacteriol.">
        <title>Complete genome sequence of the metabolically versatile plant growth-promoting endophyte, Variovorax paradoxus S110.</title>
        <authorList>
            <person name="Han J.I."/>
            <person name="Choi H.K."/>
            <person name="Lee S.W."/>
            <person name="Orwin P.M."/>
            <person name="Kim J."/>
            <person name="Laroe S.L."/>
            <person name="Kim T.G."/>
            <person name="O'Neil J."/>
            <person name="Leadbetter J.R."/>
            <person name="Lee S.Y."/>
            <person name="Hur C.G."/>
            <person name="Spain J.C."/>
            <person name="Ovchinnikova G."/>
            <person name="Goodwin L."/>
            <person name="Han C."/>
        </authorList>
    </citation>
    <scope>NUCLEOTIDE SEQUENCE [LARGE SCALE GENOMIC DNA]</scope>
    <source>
        <strain>S110</strain>
    </source>
</reference>
<keyword id="KW-0169">Cobalamin biosynthesis</keyword>
<keyword id="KW-0315">Glutamine amidotransferase</keyword>
<organism>
    <name type="scientific">Variovorax paradoxus (strain S110)</name>
    <dbReference type="NCBI Taxonomy" id="543728"/>
    <lineage>
        <taxon>Bacteria</taxon>
        <taxon>Pseudomonadati</taxon>
        <taxon>Pseudomonadota</taxon>
        <taxon>Betaproteobacteria</taxon>
        <taxon>Burkholderiales</taxon>
        <taxon>Comamonadaceae</taxon>
        <taxon>Variovorax</taxon>
    </lineage>
</organism>
<accession>C5CKN7</accession>
<feature type="chain" id="PRO_1000201973" description="Cobyric acid synthase">
    <location>
        <begin position="1"/>
        <end position="479"/>
    </location>
</feature>
<feature type="domain" description="GATase cobBQ-type" evidence="1">
    <location>
        <begin position="250"/>
        <end position="442"/>
    </location>
</feature>
<feature type="active site" description="Nucleophile" evidence="1">
    <location>
        <position position="331"/>
    </location>
</feature>
<feature type="active site" evidence="1">
    <location>
        <position position="434"/>
    </location>
</feature>
<name>COBQ_VARPS</name>
<dbReference type="EMBL" id="CP001635">
    <property type="protein sequence ID" value="ACS19191.1"/>
    <property type="molecule type" value="Genomic_DNA"/>
</dbReference>
<dbReference type="STRING" id="543728.Vapar_2565"/>
<dbReference type="KEGG" id="vap:Vapar_2565"/>
<dbReference type="eggNOG" id="COG1492">
    <property type="taxonomic scope" value="Bacteria"/>
</dbReference>
<dbReference type="HOGENOM" id="CLU_019250_2_1_4"/>
<dbReference type="OrthoDB" id="9808302at2"/>
<dbReference type="UniPathway" id="UPA00148"/>
<dbReference type="GO" id="GO:0015420">
    <property type="term" value="F:ABC-type vitamin B12 transporter activity"/>
    <property type="evidence" value="ECO:0007669"/>
    <property type="project" value="UniProtKB-UniRule"/>
</dbReference>
<dbReference type="GO" id="GO:0003824">
    <property type="term" value="F:catalytic activity"/>
    <property type="evidence" value="ECO:0007669"/>
    <property type="project" value="InterPro"/>
</dbReference>
<dbReference type="GO" id="GO:0009236">
    <property type="term" value="P:cobalamin biosynthetic process"/>
    <property type="evidence" value="ECO:0007669"/>
    <property type="project" value="UniProtKB-UniRule"/>
</dbReference>
<dbReference type="CDD" id="cd05389">
    <property type="entry name" value="CobQ_N"/>
    <property type="match status" value="1"/>
</dbReference>
<dbReference type="CDD" id="cd01750">
    <property type="entry name" value="GATase1_CobQ"/>
    <property type="match status" value="1"/>
</dbReference>
<dbReference type="Gene3D" id="3.40.50.880">
    <property type="match status" value="1"/>
</dbReference>
<dbReference type="Gene3D" id="3.40.50.300">
    <property type="entry name" value="P-loop containing nucleotide triphosphate hydrolases"/>
    <property type="match status" value="1"/>
</dbReference>
<dbReference type="HAMAP" id="MF_00028">
    <property type="entry name" value="CobQ"/>
    <property type="match status" value="1"/>
</dbReference>
<dbReference type="InterPro" id="IPR029062">
    <property type="entry name" value="Class_I_gatase-like"/>
</dbReference>
<dbReference type="InterPro" id="IPR002586">
    <property type="entry name" value="CobQ/CobB/MinD/ParA_Nub-bd_dom"/>
</dbReference>
<dbReference type="InterPro" id="IPR033949">
    <property type="entry name" value="CobQ_GATase1"/>
</dbReference>
<dbReference type="InterPro" id="IPR047045">
    <property type="entry name" value="CobQ_N"/>
</dbReference>
<dbReference type="InterPro" id="IPR004459">
    <property type="entry name" value="CobQ_synth"/>
</dbReference>
<dbReference type="InterPro" id="IPR011698">
    <property type="entry name" value="GATase_3"/>
</dbReference>
<dbReference type="InterPro" id="IPR027417">
    <property type="entry name" value="P-loop_NTPase"/>
</dbReference>
<dbReference type="NCBIfam" id="TIGR00313">
    <property type="entry name" value="cobQ"/>
    <property type="match status" value="1"/>
</dbReference>
<dbReference type="NCBIfam" id="NF001989">
    <property type="entry name" value="PRK00784.1"/>
    <property type="match status" value="1"/>
</dbReference>
<dbReference type="PANTHER" id="PTHR21343:SF1">
    <property type="entry name" value="COBYRIC ACID SYNTHASE"/>
    <property type="match status" value="1"/>
</dbReference>
<dbReference type="PANTHER" id="PTHR21343">
    <property type="entry name" value="DETHIOBIOTIN SYNTHETASE"/>
    <property type="match status" value="1"/>
</dbReference>
<dbReference type="Pfam" id="PF01656">
    <property type="entry name" value="CbiA"/>
    <property type="match status" value="1"/>
</dbReference>
<dbReference type="Pfam" id="PF07685">
    <property type="entry name" value="GATase_3"/>
    <property type="match status" value="1"/>
</dbReference>
<dbReference type="SUPFAM" id="SSF52317">
    <property type="entry name" value="Class I glutamine amidotransferase-like"/>
    <property type="match status" value="1"/>
</dbReference>
<dbReference type="SUPFAM" id="SSF52540">
    <property type="entry name" value="P-loop containing nucleoside triphosphate hydrolases"/>
    <property type="match status" value="1"/>
</dbReference>
<dbReference type="PROSITE" id="PS51274">
    <property type="entry name" value="GATASE_COBBQ"/>
    <property type="match status" value="1"/>
</dbReference>